<accession>B9JYK7</accession>
<sequence length="137" mass="15503">MSKPTNSAPSQRMLRVGEQVRAAITQVLQRGEVRDDLIEKTVISISEVRMSTDLKVATAYVSPLGVSDHDTVIAALNRHAKYIRGRIGGQLRQMKYMPEVRFRDDTSFDNYQKIDALLRSPEVARDLGPDEDKQEDE</sequence>
<comment type="function">
    <text evidence="1">One of several proteins that assist in the late maturation steps of the functional core of the 30S ribosomal subunit. Associates with free 30S ribosomal subunits (but not with 30S subunits that are part of 70S ribosomes or polysomes). Required for efficient processing of 16S rRNA. May interact with the 5'-terminal helix region of 16S rRNA.</text>
</comment>
<comment type="subunit">
    <text evidence="1">Monomer. Binds 30S ribosomal subunits, but not 50S ribosomal subunits or 70S ribosomes.</text>
</comment>
<comment type="subcellular location">
    <subcellularLocation>
        <location evidence="1">Cytoplasm</location>
    </subcellularLocation>
</comment>
<comment type="similarity">
    <text evidence="1">Belongs to the RbfA family.</text>
</comment>
<keyword id="KW-0963">Cytoplasm</keyword>
<keyword id="KW-1185">Reference proteome</keyword>
<keyword id="KW-0690">Ribosome biogenesis</keyword>
<protein>
    <recommendedName>
        <fullName evidence="1">Ribosome-binding factor A</fullName>
    </recommendedName>
</protein>
<evidence type="ECO:0000255" key="1">
    <source>
        <dbReference type="HAMAP-Rule" id="MF_00003"/>
    </source>
</evidence>
<name>RBFA_ALLAM</name>
<feature type="chain" id="PRO_1000193220" description="Ribosome-binding factor A">
    <location>
        <begin position="1"/>
        <end position="137"/>
    </location>
</feature>
<proteinExistence type="inferred from homology"/>
<dbReference type="EMBL" id="CP000633">
    <property type="protein sequence ID" value="ACM35103.1"/>
    <property type="molecule type" value="Genomic_DNA"/>
</dbReference>
<dbReference type="RefSeq" id="WP_012654633.1">
    <property type="nucleotide sequence ID" value="NC_011989.1"/>
</dbReference>
<dbReference type="SMR" id="B9JYK7"/>
<dbReference type="STRING" id="311402.Avi_0170"/>
<dbReference type="GeneID" id="60681086"/>
<dbReference type="KEGG" id="avi:Avi_0170"/>
<dbReference type="eggNOG" id="COG0858">
    <property type="taxonomic scope" value="Bacteria"/>
</dbReference>
<dbReference type="HOGENOM" id="CLU_089475_1_0_5"/>
<dbReference type="Proteomes" id="UP000001596">
    <property type="component" value="Chromosome 1"/>
</dbReference>
<dbReference type="GO" id="GO:0005829">
    <property type="term" value="C:cytosol"/>
    <property type="evidence" value="ECO:0007669"/>
    <property type="project" value="TreeGrafter"/>
</dbReference>
<dbReference type="GO" id="GO:0043024">
    <property type="term" value="F:ribosomal small subunit binding"/>
    <property type="evidence" value="ECO:0007669"/>
    <property type="project" value="TreeGrafter"/>
</dbReference>
<dbReference type="GO" id="GO:0030490">
    <property type="term" value="P:maturation of SSU-rRNA"/>
    <property type="evidence" value="ECO:0007669"/>
    <property type="project" value="UniProtKB-UniRule"/>
</dbReference>
<dbReference type="Gene3D" id="3.30.300.20">
    <property type="match status" value="1"/>
</dbReference>
<dbReference type="HAMAP" id="MF_00003">
    <property type="entry name" value="RbfA"/>
    <property type="match status" value="1"/>
</dbReference>
<dbReference type="InterPro" id="IPR015946">
    <property type="entry name" value="KH_dom-like_a/b"/>
</dbReference>
<dbReference type="InterPro" id="IPR000238">
    <property type="entry name" value="RbfA"/>
</dbReference>
<dbReference type="InterPro" id="IPR023799">
    <property type="entry name" value="RbfA_dom_sf"/>
</dbReference>
<dbReference type="InterPro" id="IPR020053">
    <property type="entry name" value="Ribosome-bd_factorA_CS"/>
</dbReference>
<dbReference type="NCBIfam" id="NF001802">
    <property type="entry name" value="PRK00521.2-5"/>
    <property type="match status" value="1"/>
</dbReference>
<dbReference type="NCBIfam" id="TIGR00082">
    <property type="entry name" value="rbfA"/>
    <property type="match status" value="1"/>
</dbReference>
<dbReference type="PANTHER" id="PTHR33515">
    <property type="entry name" value="RIBOSOME-BINDING FACTOR A, CHLOROPLASTIC-RELATED"/>
    <property type="match status" value="1"/>
</dbReference>
<dbReference type="PANTHER" id="PTHR33515:SF1">
    <property type="entry name" value="RIBOSOME-BINDING FACTOR A, CHLOROPLASTIC-RELATED"/>
    <property type="match status" value="1"/>
</dbReference>
<dbReference type="Pfam" id="PF02033">
    <property type="entry name" value="RBFA"/>
    <property type="match status" value="1"/>
</dbReference>
<dbReference type="SUPFAM" id="SSF89919">
    <property type="entry name" value="Ribosome-binding factor A, RbfA"/>
    <property type="match status" value="1"/>
</dbReference>
<dbReference type="PROSITE" id="PS01319">
    <property type="entry name" value="RBFA"/>
    <property type="match status" value="1"/>
</dbReference>
<reference key="1">
    <citation type="journal article" date="2009" name="J. Bacteriol.">
        <title>Genome sequences of three Agrobacterium biovars help elucidate the evolution of multichromosome genomes in bacteria.</title>
        <authorList>
            <person name="Slater S.C."/>
            <person name="Goldman B.S."/>
            <person name="Goodner B."/>
            <person name="Setubal J.C."/>
            <person name="Farrand S.K."/>
            <person name="Nester E.W."/>
            <person name="Burr T.J."/>
            <person name="Banta L."/>
            <person name="Dickerman A.W."/>
            <person name="Paulsen I."/>
            <person name="Otten L."/>
            <person name="Suen G."/>
            <person name="Welch R."/>
            <person name="Almeida N.F."/>
            <person name="Arnold F."/>
            <person name="Burton O.T."/>
            <person name="Du Z."/>
            <person name="Ewing A."/>
            <person name="Godsy E."/>
            <person name="Heisel S."/>
            <person name="Houmiel K.L."/>
            <person name="Jhaveri J."/>
            <person name="Lu J."/>
            <person name="Miller N.M."/>
            <person name="Norton S."/>
            <person name="Chen Q."/>
            <person name="Phoolcharoen W."/>
            <person name="Ohlin V."/>
            <person name="Ondrusek D."/>
            <person name="Pride N."/>
            <person name="Stricklin S.L."/>
            <person name="Sun J."/>
            <person name="Wheeler C."/>
            <person name="Wilson L."/>
            <person name="Zhu H."/>
            <person name="Wood D.W."/>
        </authorList>
    </citation>
    <scope>NUCLEOTIDE SEQUENCE [LARGE SCALE GENOMIC DNA]</scope>
    <source>
        <strain>ATCC BAA-846 / DSM 112012 / S4</strain>
    </source>
</reference>
<gene>
    <name evidence="1" type="primary">rbfA</name>
    <name type="ordered locus">Avi_0170</name>
</gene>
<organism>
    <name type="scientific">Allorhizobium ampelinum (strain ATCC BAA-846 / DSM 112012 / S4)</name>
    <name type="common">Agrobacterium vitis (strain S4)</name>
    <dbReference type="NCBI Taxonomy" id="311402"/>
    <lineage>
        <taxon>Bacteria</taxon>
        <taxon>Pseudomonadati</taxon>
        <taxon>Pseudomonadota</taxon>
        <taxon>Alphaproteobacteria</taxon>
        <taxon>Hyphomicrobiales</taxon>
        <taxon>Rhizobiaceae</taxon>
        <taxon>Rhizobium/Agrobacterium group</taxon>
        <taxon>Allorhizobium</taxon>
        <taxon>Allorhizobium ampelinum</taxon>
    </lineage>
</organism>